<accession>B9KGY6</accession>
<organism>
    <name type="scientific">Anaplasma marginale (strain Florida)</name>
    <dbReference type="NCBI Taxonomy" id="320483"/>
    <lineage>
        <taxon>Bacteria</taxon>
        <taxon>Pseudomonadati</taxon>
        <taxon>Pseudomonadota</taxon>
        <taxon>Alphaproteobacteria</taxon>
        <taxon>Rickettsiales</taxon>
        <taxon>Anaplasmataceae</taxon>
        <taxon>Anaplasma</taxon>
    </lineage>
</organism>
<evidence type="ECO:0000255" key="1">
    <source>
        <dbReference type="HAMAP-Rule" id="MF_00451"/>
    </source>
</evidence>
<keyword id="KW-0067">ATP-binding</keyword>
<keyword id="KW-0963">Cytoplasm</keyword>
<keyword id="KW-0418">Kinase</keyword>
<keyword id="KW-0460">Magnesium</keyword>
<keyword id="KW-0479">Metal-binding</keyword>
<keyword id="KW-0546">Nucleotide metabolism</keyword>
<keyword id="KW-0547">Nucleotide-binding</keyword>
<keyword id="KW-0597">Phosphoprotein</keyword>
<keyword id="KW-1185">Reference proteome</keyword>
<keyword id="KW-0808">Transferase</keyword>
<proteinExistence type="inferred from homology"/>
<comment type="function">
    <text evidence="1">Major role in the synthesis of nucleoside triphosphates other than ATP. The ATP gamma phosphate is transferred to the NDP beta phosphate via a ping-pong mechanism, using a phosphorylated active-site intermediate.</text>
</comment>
<comment type="catalytic activity">
    <reaction evidence="1">
        <text>a 2'-deoxyribonucleoside 5'-diphosphate + ATP = a 2'-deoxyribonucleoside 5'-triphosphate + ADP</text>
        <dbReference type="Rhea" id="RHEA:44640"/>
        <dbReference type="ChEBI" id="CHEBI:30616"/>
        <dbReference type="ChEBI" id="CHEBI:61560"/>
        <dbReference type="ChEBI" id="CHEBI:73316"/>
        <dbReference type="ChEBI" id="CHEBI:456216"/>
        <dbReference type="EC" id="2.7.4.6"/>
    </reaction>
</comment>
<comment type="catalytic activity">
    <reaction evidence="1">
        <text>a ribonucleoside 5'-diphosphate + ATP = a ribonucleoside 5'-triphosphate + ADP</text>
        <dbReference type="Rhea" id="RHEA:18113"/>
        <dbReference type="ChEBI" id="CHEBI:30616"/>
        <dbReference type="ChEBI" id="CHEBI:57930"/>
        <dbReference type="ChEBI" id="CHEBI:61557"/>
        <dbReference type="ChEBI" id="CHEBI:456216"/>
        <dbReference type="EC" id="2.7.4.6"/>
    </reaction>
</comment>
<comment type="cofactor">
    <cofactor evidence="1">
        <name>Mg(2+)</name>
        <dbReference type="ChEBI" id="CHEBI:18420"/>
    </cofactor>
</comment>
<comment type="subunit">
    <text evidence="1">Homotetramer.</text>
</comment>
<comment type="subcellular location">
    <subcellularLocation>
        <location evidence="1">Cytoplasm</location>
    </subcellularLocation>
</comment>
<comment type="similarity">
    <text evidence="1">Belongs to the NDK family.</text>
</comment>
<protein>
    <recommendedName>
        <fullName evidence="1">Nucleoside diphosphate kinase</fullName>
        <shortName evidence="1">NDK</shortName>
        <shortName evidence="1">NDP kinase</shortName>
        <ecNumber evidence="1">2.7.4.6</ecNumber>
    </recommendedName>
    <alternativeName>
        <fullName evidence="1">Nucleoside-2-P kinase</fullName>
    </alternativeName>
</protein>
<name>NDK_ANAMF</name>
<gene>
    <name evidence="1" type="primary">ndk</name>
    <name type="ordered locus">AMF_859</name>
</gene>
<dbReference type="EC" id="2.7.4.6" evidence="1"/>
<dbReference type="EMBL" id="CP001079">
    <property type="protein sequence ID" value="ACM49690.1"/>
    <property type="molecule type" value="Genomic_DNA"/>
</dbReference>
<dbReference type="SMR" id="B9KGY6"/>
<dbReference type="STRING" id="320483.AMF_859"/>
<dbReference type="KEGG" id="amf:AMF_859"/>
<dbReference type="eggNOG" id="COG0105">
    <property type="taxonomic scope" value="Bacteria"/>
</dbReference>
<dbReference type="HOGENOM" id="CLU_060216_8_1_5"/>
<dbReference type="Proteomes" id="UP000007307">
    <property type="component" value="Chromosome"/>
</dbReference>
<dbReference type="GO" id="GO:0005737">
    <property type="term" value="C:cytoplasm"/>
    <property type="evidence" value="ECO:0007669"/>
    <property type="project" value="UniProtKB-SubCell"/>
</dbReference>
<dbReference type="GO" id="GO:0005524">
    <property type="term" value="F:ATP binding"/>
    <property type="evidence" value="ECO:0007669"/>
    <property type="project" value="UniProtKB-UniRule"/>
</dbReference>
<dbReference type="GO" id="GO:0046872">
    <property type="term" value="F:metal ion binding"/>
    <property type="evidence" value="ECO:0007669"/>
    <property type="project" value="UniProtKB-KW"/>
</dbReference>
<dbReference type="GO" id="GO:0004550">
    <property type="term" value="F:nucleoside diphosphate kinase activity"/>
    <property type="evidence" value="ECO:0007669"/>
    <property type="project" value="UniProtKB-UniRule"/>
</dbReference>
<dbReference type="GO" id="GO:0006241">
    <property type="term" value="P:CTP biosynthetic process"/>
    <property type="evidence" value="ECO:0007669"/>
    <property type="project" value="UniProtKB-UniRule"/>
</dbReference>
<dbReference type="GO" id="GO:0006183">
    <property type="term" value="P:GTP biosynthetic process"/>
    <property type="evidence" value="ECO:0007669"/>
    <property type="project" value="UniProtKB-UniRule"/>
</dbReference>
<dbReference type="GO" id="GO:0006228">
    <property type="term" value="P:UTP biosynthetic process"/>
    <property type="evidence" value="ECO:0007669"/>
    <property type="project" value="UniProtKB-UniRule"/>
</dbReference>
<dbReference type="CDD" id="cd04413">
    <property type="entry name" value="NDPk_I"/>
    <property type="match status" value="1"/>
</dbReference>
<dbReference type="FunFam" id="3.30.70.141:FF:000003">
    <property type="entry name" value="Nucleoside diphosphate kinase"/>
    <property type="match status" value="1"/>
</dbReference>
<dbReference type="Gene3D" id="3.30.70.141">
    <property type="entry name" value="Nucleoside diphosphate kinase-like domain"/>
    <property type="match status" value="1"/>
</dbReference>
<dbReference type="HAMAP" id="MF_00451">
    <property type="entry name" value="NDP_kinase"/>
    <property type="match status" value="1"/>
</dbReference>
<dbReference type="InterPro" id="IPR034907">
    <property type="entry name" value="NDK-like_dom"/>
</dbReference>
<dbReference type="InterPro" id="IPR036850">
    <property type="entry name" value="NDK-like_dom_sf"/>
</dbReference>
<dbReference type="InterPro" id="IPR001564">
    <property type="entry name" value="Nucleoside_diP_kinase"/>
</dbReference>
<dbReference type="InterPro" id="IPR023005">
    <property type="entry name" value="Nucleoside_diP_kinase_AS"/>
</dbReference>
<dbReference type="NCBIfam" id="NF001908">
    <property type="entry name" value="PRK00668.1"/>
    <property type="match status" value="1"/>
</dbReference>
<dbReference type="PANTHER" id="PTHR46161">
    <property type="entry name" value="NUCLEOSIDE DIPHOSPHATE KINASE"/>
    <property type="match status" value="1"/>
</dbReference>
<dbReference type="PANTHER" id="PTHR46161:SF3">
    <property type="entry name" value="NUCLEOSIDE DIPHOSPHATE KINASE DDB_G0292928-RELATED"/>
    <property type="match status" value="1"/>
</dbReference>
<dbReference type="Pfam" id="PF00334">
    <property type="entry name" value="NDK"/>
    <property type="match status" value="1"/>
</dbReference>
<dbReference type="PRINTS" id="PR01243">
    <property type="entry name" value="NUCDPKINASE"/>
</dbReference>
<dbReference type="SMART" id="SM00562">
    <property type="entry name" value="NDK"/>
    <property type="match status" value="1"/>
</dbReference>
<dbReference type="SUPFAM" id="SSF54919">
    <property type="entry name" value="Nucleoside diphosphate kinase, NDK"/>
    <property type="match status" value="1"/>
</dbReference>
<dbReference type="PROSITE" id="PS00469">
    <property type="entry name" value="NDPK"/>
    <property type="match status" value="1"/>
</dbReference>
<dbReference type="PROSITE" id="PS51374">
    <property type="entry name" value="NDPK_LIKE"/>
    <property type="match status" value="1"/>
</dbReference>
<reference key="1">
    <citation type="journal article" date="2009" name="BMC Genomics">
        <title>Conservation in the face of diversity: multistrain analysis of an intracellular bacterium.</title>
        <authorList>
            <person name="Dark M.J."/>
            <person name="Herndon D.R."/>
            <person name="Kappmeyer L.S."/>
            <person name="Gonzales M.P."/>
            <person name="Nordeen E."/>
            <person name="Palmer G.H."/>
            <person name="Knowles D.P. Jr."/>
            <person name="Brayton K.A."/>
        </authorList>
    </citation>
    <scope>NUCLEOTIDE SEQUENCE [LARGE SCALE GENOMIC DNA]</scope>
    <source>
        <strain>Florida</strain>
    </source>
</reference>
<sequence>MMFEKTLSILKPDVVERGIIGRVLSYIEAAGLRIVAQRMCALSHEQAEAFYAVHKARPFFPSLVGFMTSGPVVVQVLVGESAVKTYRDVMGATNPSEAAPGTIRGDLAESIDANCVHGSDSLENAEWEIKFFFKEHEIMSSMPNGK</sequence>
<feature type="chain" id="PRO_1000135240" description="Nucleoside diphosphate kinase">
    <location>
        <begin position="1"/>
        <end position="146"/>
    </location>
</feature>
<feature type="active site" description="Pros-phosphohistidine intermediate" evidence="1">
    <location>
        <position position="117"/>
    </location>
</feature>
<feature type="binding site" evidence="1">
    <location>
        <position position="11"/>
    </location>
    <ligand>
        <name>ATP</name>
        <dbReference type="ChEBI" id="CHEBI:30616"/>
    </ligand>
</feature>
<feature type="binding site" evidence="1">
    <location>
        <position position="59"/>
    </location>
    <ligand>
        <name>ATP</name>
        <dbReference type="ChEBI" id="CHEBI:30616"/>
    </ligand>
</feature>
<feature type="binding site" evidence="1">
    <location>
        <position position="87"/>
    </location>
    <ligand>
        <name>ATP</name>
        <dbReference type="ChEBI" id="CHEBI:30616"/>
    </ligand>
</feature>
<feature type="binding site" evidence="1">
    <location>
        <position position="93"/>
    </location>
    <ligand>
        <name>ATP</name>
        <dbReference type="ChEBI" id="CHEBI:30616"/>
    </ligand>
</feature>
<feature type="binding site" evidence="1">
    <location>
        <position position="104"/>
    </location>
    <ligand>
        <name>ATP</name>
        <dbReference type="ChEBI" id="CHEBI:30616"/>
    </ligand>
</feature>
<feature type="binding site" evidence="1">
    <location>
        <position position="114"/>
    </location>
    <ligand>
        <name>ATP</name>
        <dbReference type="ChEBI" id="CHEBI:30616"/>
    </ligand>
</feature>